<organism>
    <name type="scientific">Sinorhizobium fredii (strain NBRC 101917 / NGR234)</name>
    <dbReference type="NCBI Taxonomy" id="394"/>
    <lineage>
        <taxon>Bacteria</taxon>
        <taxon>Pseudomonadati</taxon>
        <taxon>Pseudomonadota</taxon>
        <taxon>Alphaproteobacteria</taxon>
        <taxon>Hyphomicrobiales</taxon>
        <taxon>Rhizobiaceae</taxon>
        <taxon>Sinorhizobium/Ensifer group</taxon>
        <taxon>Sinorhizobium</taxon>
    </lineage>
</organism>
<keyword id="KW-0574">Periplasm</keyword>
<keyword id="KW-0614">Plasmid</keyword>
<keyword id="KW-1185">Reference proteome</keyword>
<keyword id="KW-0732">Signal</keyword>
<keyword id="KW-0813">Transport</keyword>
<feature type="signal peptide" evidence="1">
    <location>
        <begin position="1"/>
        <end position="29"/>
    </location>
</feature>
<feature type="chain" id="PRO_0000031810" description="Uncharacterized protein y4wM">
    <location>
        <begin position="30"/>
        <end position="663"/>
    </location>
</feature>
<name>Y4WM_SINFN</name>
<gene>
    <name type="ordered locus">NGR_a00920</name>
    <name type="ORF">y4wM</name>
</gene>
<comment type="function">
    <text>Possible binding-protein with either a transport or enzymatic activity.</text>
</comment>
<comment type="subcellular location">
    <subcellularLocation>
        <location evidence="2">Periplasm</location>
    </subcellularLocation>
</comment>
<comment type="similarity">
    <text evidence="2">Belongs to the bacterial solute-binding protein 5 family.</text>
</comment>
<reference key="1">
    <citation type="journal article" date="1997" name="Nature">
        <title>Molecular basis of symbiosis between Rhizobium and legumes.</title>
        <authorList>
            <person name="Freiberg C.A."/>
            <person name="Fellay R."/>
            <person name="Bairoch A."/>
            <person name="Broughton W.J."/>
            <person name="Rosenthal A."/>
            <person name="Perret X."/>
        </authorList>
    </citation>
    <scope>NUCLEOTIDE SEQUENCE [LARGE SCALE GENOMIC DNA]</scope>
    <source>
        <strain>NBRC 101917 / NGR234</strain>
    </source>
</reference>
<reference key="2">
    <citation type="journal article" date="2009" name="Appl. Environ. Microbiol.">
        <title>Rhizobium sp. strain NGR234 possesses a remarkable number of secretion systems.</title>
        <authorList>
            <person name="Schmeisser C."/>
            <person name="Liesegang H."/>
            <person name="Krysciak D."/>
            <person name="Bakkou N."/>
            <person name="Le Quere A."/>
            <person name="Wollherr A."/>
            <person name="Heinemeyer I."/>
            <person name="Morgenstern B."/>
            <person name="Pommerening-Roeser A."/>
            <person name="Flores M."/>
            <person name="Palacios R."/>
            <person name="Brenner S."/>
            <person name="Gottschalk G."/>
            <person name="Schmitz R.A."/>
            <person name="Broughton W.J."/>
            <person name="Perret X."/>
            <person name="Strittmatter A.W."/>
            <person name="Streit W.R."/>
        </authorList>
    </citation>
    <scope>NUCLEOTIDE SEQUENCE [LARGE SCALE GENOMIC DNA]</scope>
    <source>
        <strain>NBRC 101917 / NGR234</strain>
    </source>
</reference>
<dbReference type="EMBL" id="U00090">
    <property type="protein sequence ID" value="AAB91920.1"/>
    <property type="molecule type" value="Genomic_DNA"/>
</dbReference>
<dbReference type="RefSeq" id="NP_444133.1">
    <property type="nucleotide sequence ID" value="NC_000914.2"/>
</dbReference>
<dbReference type="RefSeq" id="WP_010875133.1">
    <property type="nucleotide sequence ID" value="NC_000914.2"/>
</dbReference>
<dbReference type="SMR" id="P55691"/>
<dbReference type="STRING" id="394.NGR_c34820"/>
<dbReference type="KEGG" id="rhi:NGR_a00920"/>
<dbReference type="PATRIC" id="fig|394.7.peg.82"/>
<dbReference type="eggNOG" id="COG4166">
    <property type="taxonomic scope" value="Bacteria"/>
</dbReference>
<dbReference type="HOGENOM" id="CLU_023171_0_0_5"/>
<dbReference type="OrthoDB" id="9803988at2"/>
<dbReference type="Proteomes" id="UP000001054">
    <property type="component" value="Plasmid pNGR234a"/>
</dbReference>
<dbReference type="GO" id="GO:0043190">
    <property type="term" value="C:ATP-binding cassette (ABC) transporter complex"/>
    <property type="evidence" value="ECO:0007669"/>
    <property type="project" value="InterPro"/>
</dbReference>
<dbReference type="GO" id="GO:0030288">
    <property type="term" value="C:outer membrane-bounded periplasmic space"/>
    <property type="evidence" value="ECO:0007669"/>
    <property type="project" value="TreeGrafter"/>
</dbReference>
<dbReference type="GO" id="GO:1904680">
    <property type="term" value="F:peptide transmembrane transporter activity"/>
    <property type="evidence" value="ECO:0007669"/>
    <property type="project" value="TreeGrafter"/>
</dbReference>
<dbReference type="GO" id="GO:0042884">
    <property type="term" value="P:microcin transport"/>
    <property type="evidence" value="ECO:0007669"/>
    <property type="project" value="TreeGrafter"/>
</dbReference>
<dbReference type="GO" id="GO:0015833">
    <property type="term" value="P:peptide transport"/>
    <property type="evidence" value="ECO:0007669"/>
    <property type="project" value="TreeGrafter"/>
</dbReference>
<dbReference type="CDD" id="cd08497">
    <property type="entry name" value="MbnE-like"/>
    <property type="match status" value="1"/>
</dbReference>
<dbReference type="Gene3D" id="3.10.105.10">
    <property type="entry name" value="Dipeptide-binding Protein, Domain 3"/>
    <property type="match status" value="1"/>
</dbReference>
<dbReference type="Gene3D" id="3.40.190.10">
    <property type="entry name" value="Periplasmic binding protein-like II"/>
    <property type="match status" value="1"/>
</dbReference>
<dbReference type="InterPro" id="IPR030678">
    <property type="entry name" value="Peptide/Ni-bd"/>
</dbReference>
<dbReference type="InterPro" id="IPR039424">
    <property type="entry name" value="SBP_5"/>
</dbReference>
<dbReference type="InterPro" id="IPR000914">
    <property type="entry name" value="SBP_5_dom"/>
</dbReference>
<dbReference type="PANTHER" id="PTHR30290:SF64">
    <property type="entry name" value="ABC TRANSPORTER PERIPLASMIC BINDING PROTEIN"/>
    <property type="match status" value="1"/>
</dbReference>
<dbReference type="PANTHER" id="PTHR30290">
    <property type="entry name" value="PERIPLASMIC BINDING COMPONENT OF ABC TRANSPORTER"/>
    <property type="match status" value="1"/>
</dbReference>
<dbReference type="Pfam" id="PF00496">
    <property type="entry name" value="SBP_bac_5"/>
    <property type="match status" value="1"/>
</dbReference>
<dbReference type="PIRSF" id="PIRSF002741">
    <property type="entry name" value="MppA"/>
    <property type="match status" value="1"/>
</dbReference>
<dbReference type="SUPFAM" id="SSF53850">
    <property type="entry name" value="Periplasmic binding protein-like II"/>
    <property type="match status" value="1"/>
</dbReference>
<protein>
    <recommendedName>
        <fullName>Uncharacterized protein y4wM</fullName>
    </recommendedName>
</protein>
<geneLocation type="plasmid">
    <name>sym pNGR234a</name>
</geneLocation>
<accession>P55691</accession>
<evidence type="ECO:0000255" key="1"/>
<evidence type="ECO:0000305" key="2"/>
<sequence>MLDIGVIGRLKFATAFMAMSLLLVPAAEAQEQPVWHYGLSLVDDLKYPPGFKKFDYVNPEAPKGGDLRLSQTGTFDTFNPLLVKGETAVGLDFVFDTLMKPSEDEISTAYGLLAEGVSFPDDISSATFRLRQEAKWADGKPVTPEDVVFSFDKAKELNPLYQSYYRHVVKAEKTGDRDVTFHFDDKNNHELPHILGQIRIVPKHWWEGTGPDGKPRDISRTTLEPVMGSGPYRIASFAPGGTIRYERRPDYWGVALNVNVGQNNFDSITYSFFGDRDVEFEAFRSGNTDYWRENQAMRWATAFDFPAVKDGRVKREEIPNPFRATAVMQAMVPNMRRKPFDDERVRQALNYALDFEELNRTIFYNQYQRVNSFFFATELASSGLPEGKELKNLNEVKDLVPPEVFTTPYSNPVGGTPQKARENLRKAIELLNKAGFELNGNRMVNTETGKPFSFEIMLSSPSFERVALPYAQNLKRIGIEARVRTVDPSQYTNRKRAFDYDVTWEVWGQSLSPGNEQADYWGSAAATRQGSRNYAGISDPGVDALIERVIFAKDRETLVAATKALDRVLLAHNYVIPLYYKLAAQIAYWDALARPKELPKYGLGFPEVWWSKSAACHLPAGVRCSCICGSSGEAGRHQFTPDRRLIRNAQLLDQICAASEFKG</sequence>
<proteinExistence type="inferred from homology"/>